<accession>Q12428</accession>
<accession>D6W413</accession>
<name>PRPD_YEAST</name>
<organism>
    <name type="scientific">Saccharomyces cerevisiae (strain ATCC 204508 / S288c)</name>
    <name type="common">Baker's yeast</name>
    <dbReference type="NCBI Taxonomy" id="559292"/>
    <lineage>
        <taxon>Eukaryota</taxon>
        <taxon>Fungi</taxon>
        <taxon>Dikarya</taxon>
        <taxon>Ascomycota</taxon>
        <taxon>Saccharomycotina</taxon>
        <taxon>Saccharomycetes</taxon>
        <taxon>Saccharomycetales</taxon>
        <taxon>Saccharomycetaceae</taxon>
        <taxon>Saccharomyces</taxon>
    </lineage>
</organism>
<comment type="function">
    <text evidence="1">Catalyzes the stereospecific dehydration of (2S,3S)-2-methylcitrate (2-MC) to yield the cis isomer of 2-methyl-aconitate.</text>
</comment>
<comment type="catalytic activity">
    <reaction evidence="1">
        <text>(2S,3S)-2-methylcitrate = 2-methyl-cis-aconitate + H2O</text>
        <dbReference type="Rhea" id="RHEA:17725"/>
        <dbReference type="ChEBI" id="CHEBI:15377"/>
        <dbReference type="ChEBI" id="CHEBI:57872"/>
        <dbReference type="ChEBI" id="CHEBI:58853"/>
        <dbReference type="EC" id="4.2.1.79"/>
    </reaction>
</comment>
<comment type="pathway">
    <text evidence="1">Organic acid metabolism; propanoate degradation.</text>
</comment>
<comment type="miscellaneous">
    <text evidence="2">Present with 2730 molecules/cell in log phase SD medium.</text>
</comment>
<comment type="similarity">
    <text evidence="3">Belongs to the PrpD family.</text>
</comment>
<dbReference type="EC" id="4.2.1.79" evidence="1"/>
<dbReference type="EMBL" id="Z71255">
    <property type="protein sequence ID" value="CAA95042.1"/>
    <property type="molecule type" value="Genomic_DNA"/>
</dbReference>
<dbReference type="EMBL" id="Z48951">
    <property type="protein sequence ID" value="CAA88780.1"/>
    <property type="molecule type" value="Genomic_DNA"/>
</dbReference>
<dbReference type="EMBL" id="U31900">
    <property type="protein sequence ID" value="AAA97581.1"/>
    <property type="molecule type" value="Genomic_DNA"/>
</dbReference>
<dbReference type="EMBL" id="BK006949">
    <property type="protein sequence ID" value="DAA11429.1"/>
    <property type="molecule type" value="Genomic_DNA"/>
</dbReference>
<dbReference type="PIR" id="S52815">
    <property type="entry name" value="S52815"/>
</dbReference>
<dbReference type="RefSeq" id="NP_015326.1">
    <property type="nucleotide sequence ID" value="NM_001184099.1"/>
</dbReference>
<dbReference type="SMR" id="Q12428"/>
<dbReference type="BioGRID" id="36178">
    <property type="interactions" value="41"/>
</dbReference>
<dbReference type="FunCoup" id="Q12428">
    <property type="interactions" value="86"/>
</dbReference>
<dbReference type="IntAct" id="Q12428">
    <property type="interactions" value="4"/>
</dbReference>
<dbReference type="MINT" id="Q12428"/>
<dbReference type="STRING" id="4932.YPR002W"/>
<dbReference type="iPTMnet" id="Q12428"/>
<dbReference type="PaxDb" id="4932-YPR002W"/>
<dbReference type="PeptideAtlas" id="Q12428"/>
<dbReference type="EnsemblFungi" id="YPR002W_mRNA">
    <property type="protein sequence ID" value="YPR002W"/>
    <property type="gene ID" value="YPR002W"/>
</dbReference>
<dbReference type="GeneID" id="856108"/>
<dbReference type="KEGG" id="sce:YPR002W"/>
<dbReference type="AGR" id="SGD:S000006206"/>
<dbReference type="SGD" id="S000006206">
    <property type="gene designation" value="PDH1"/>
</dbReference>
<dbReference type="VEuPathDB" id="FungiDB:YPR002W"/>
<dbReference type="eggNOG" id="ENOG502QPZI">
    <property type="taxonomic scope" value="Eukaryota"/>
</dbReference>
<dbReference type="GeneTree" id="ENSGT00390000015700"/>
<dbReference type="HOGENOM" id="CLU_021803_1_0_1"/>
<dbReference type="InParanoid" id="Q12428"/>
<dbReference type="OMA" id="DHSVMYI"/>
<dbReference type="OrthoDB" id="10055203at2759"/>
<dbReference type="BioCyc" id="YEAST:G3O-34164-MONOMER"/>
<dbReference type="UniPathway" id="UPA00946"/>
<dbReference type="BioGRID-ORCS" id="856108">
    <property type="hits" value="9 hits in 10 CRISPR screens"/>
</dbReference>
<dbReference type="PRO" id="PR:Q12428"/>
<dbReference type="Proteomes" id="UP000002311">
    <property type="component" value="Chromosome XVI"/>
</dbReference>
<dbReference type="RNAct" id="Q12428">
    <property type="molecule type" value="protein"/>
</dbReference>
<dbReference type="GO" id="GO:0005737">
    <property type="term" value="C:cytoplasm"/>
    <property type="evidence" value="ECO:0007005"/>
    <property type="project" value="SGD"/>
</dbReference>
<dbReference type="GO" id="GO:0005741">
    <property type="term" value="C:mitochondrial outer membrane"/>
    <property type="evidence" value="ECO:0007005"/>
    <property type="project" value="SGD"/>
</dbReference>
<dbReference type="GO" id="GO:0005739">
    <property type="term" value="C:mitochondrion"/>
    <property type="evidence" value="ECO:0007005"/>
    <property type="project" value="SGD"/>
</dbReference>
<dbReference type="GO" id="GO:0051537">
    <property type="term" value="F:2 iron, 2 sulfur cluster binding"/>
    <property type="evidence" value="ECO:0007669"/>
    <property type="project" value="InterPro"/>
</dbReference>
<dbReference type="GO" id="GO:0047547">
    <property type="term" value="F:2-methylcitrate dehydratase activity"/>
    <property type="evidence" value="ECO:0007669"/>
    <property type="project" value="UniProtKB-EC"/>
</dbReference>
<dbReference type="GO" id="GO:0019541">
    <property type="term" value="P:propionate metabolic process"/>
    <property type="evidence" value="ECO:0000315"/>
    <property type="project" value="SGD"/>
</dbReference>
<dbReference type="GO" id="GO:0019679">
    <property type="term" value="P:propionate metabolic process, methylcitrate cycle"/>
    <property type="evidence" value="ECO:0007669"/>
    <property type="project" value="InterPro"/>
</dbReference>
<dbReference type="FunFam" id="3.30.1330.120:FF:000001">
    <property type="entry name" value="2-methylcitrate dehydratase"/>
    <property type="match status" value="1"/>
</dbReference>
<dbReference type="Gene3D" id="1.10.4100.10">
    <property type="entry name" value="2-methylcitrate dehydratase PrpD"/>
    <property type="match status" value="1"/>
</dbReference>
<dbReference type="Gene3D" id="3.30.1330.120">
    <property type="entry name" value="2-methylcitrate dehydratase PrpD"/>
    <property type="match status" value="1"/>
</dbReference>
<dbReference type="InterPro" id="IPR012705">
    <property type="entry name" value="2Me_IsoCit_deHydtase_PrpD"/>
</dbReference>
<dbReference type="InterPro" id="IPR036148">
    <property type="entry name" value="MmgE/PrpD_sf"/>
</dbReference>
<dbReference type="InterPro" id="IPR042183">
    <property type="entry name" value="MmgE/PrpD_sf_1"/>
</dbReference>
<dbReference type="InterPro" id="IPR042188">
    <property type="entry name" value="MmgE/PrpD_sf_2"/>
</dbReference>
<dbReference type="InterPro" id="IPR005656">
    <property type="entry name" value="MmgE_PrpD"/>
</dbReference>
<dbReference type="InterPro" id="IPR045337">
    <property type="entry name" value="MmgE_PrpD_C"/>
</dbReference>
<dbReference type="InterPro" id="IPR045336">
    <property type="entry name" value="MmgE_PrpD_N"/>
</dbReference>
<dbReference type="NCBIfam" id="NF006943">
    <property type="entry name" value="PRK09425.1"/>
    <property type="match status" value="1"/>
</dbReference>
<dbReference type="NCBIfam" id="TIGR02330">
    <property type="entry name" value="prpD"/>
    <property type="match status" value="1"/>
</dbReference>
<dbReference type="PANTHER" id="PTHR16943">
    <property type="entry name" value="2-METHYLCITRATE DEHYDRATASE-RELATED"/>
    <property type="match status" value="1"/>
</dbReference>
<dbReference type="PANTHER" id="PTHR16943:SF16">
    <property type="entry name" value="2-METHYLCITRATE DEHYDRATASE-RELATED"/>
    <property type="match status" value="1"/>
</dbReference>
<dbReference type="Pfam" id="PF19305">
    <property type="entry name" value="MmgE_PrpD_C"/>
    <property type="match status" value="1"/>
</dbReference>
<dbReference type="Pfam" id="PF03972">
    <property type="entry name" value="MmgE_PrpD_N"/>
    <property type="match status" value="1"/>
</dbReference>
<dbReference type="SUPFAM" id="SSF103378">
    <property type="entry name" value="2-methylcitrate dehydratase PrpD"/>
    <property type="match status" value="1"/>
</dbReference>
<reference key="1">
    <citation type="journal article" date="1997" name="Nature">
        <title>The nucleotide sequence of Saccharomyces cerevisiae chromosome XVI.</title>
        <authorList>
            <person name="Bussey H."/>
            <person name="Storms R.K."/>
            <person name="Ahmed A."/>
            <person name="Albermann K."/>
            <person name="Allen E."/>
            <person name="Ansorge W."/>
            <person name="Araujo R."/>
            <person name="Aparicio A."/>
            <person name="Barrell B.G."/>
            <person name="Badcock K."/>
            <person name="Benes V."/>
            <person name="Botstein D."/>
            <person name="Bowman S."/>
            <person name="Brueckner M."/>
            <person name="Carpenter J."/>
            <person name="Cherry J.M."/>
            <person name="Chung E."/>
            <person name="Churcher C.M."/>
            <person name="Coster F."/>
            <person name="Davis K."/>
            <person name="Davis R.W."/>
            <person name="Dietrich F.S."/>
            <person name="Delius H."/>
            <person name="DiPaolo T."/>
            <person name="Dubois E."/>
            <person name="Duesterhoeft A."/>
            <person name="Duncan M."/>
            <person name="Floeth M."/>
            <person name="Fortin N."/>
            <person name="Friesen J.D."/>
            <person name="Fritz C."/>
            <person name="Goffeau A."/>
            <person name="Hall J."/>
            <person name="Hebling U."/>
            <person name="Heumann K."/>
            <person name="Hilbert H."/>
            <person name="Hillier L.W."/>
            <person name="Hunicke-Smith S."/>
            <person name="Hyman R.W."/>
            <person name="Johnston M."/>
            <person name="Kalman S."/>
            <person name="Kleine K."/>
            <person name="Komp C."/>
            <person name="Kurdi O."/>
            <person name="Lashkari D."/>
            <person name="Lew H."/>
            <person name="Lin A."/>
            <person name="Lin D."/>
            <person name="Louis E.J."/>
            <person name="Marathe R."/>
            <person name="Messenguy F."/>
            <person name="Mewes H.-W."/>
            <person name="Mirtipati S."/>
            <person name="Moestl D."/>
            <person name="Mueller-Auer S."/>
            <person name="Namath A."/>
            <person name="Nentwich U."/>
            <person name="Oefner P."/>
            <person name="Pearson D."/>
            <person name="Petel F.X."/>
            <person name="Pohl T.M."/>
            <person name="Purnelle B."/>
            <person name="Rajandream M.A."/>
            <person name="Rechmann S."/>
            <person name="Rieger M."/>
            <person name="Riles L."/>
            <person name="Roberts D."/>
            <person name="Schaefer M."/>
            <person name="Scharfe M."/>
            <person name="Scherens B."/>
            <person name="Schramm S."/>
            <person name="Schroeder M."/>
            <person name="Sdicu A.-M."/>
            <person name="Tettelin H."/>
            <person name="Urrestarazu L.A."/>
            <person name="Ushinsky S."/>
            <person name="Vierendeels F."/>
            <person name="Vissers S."/>
            <person name="Voss H."/>
            <person name="Walsh S.V."/>
            <person name="Wambutt R."/>
            <person name="Wang Y."/>
            <person name="Wedler E."/>
            <person name="Wedler H."/>
            <person name="Winnett E."/>
            <person name="Zhong W.-W."/>
            <person name="Zollner A."/>
            <person name="Vo D.H."/>
            <person name="Hani J."/>
        </authorList>
    </citation>
    <scope>NUCLEOTIDE SEQUENCE [LARGE SCALE GENOMIC DNA]</scope>
    <source>
        <strain>ATCC 204508 / S288c</strain>
    </source>
</reference>
<reference key="2">
    <citation type="journal article" date="2014" name="G3 (Bethesda)">
        <title>The reference genome sequence of Saccharomyces cerevisiae: Then and now.</title>
        <authorList>
            <person name="Engel S.R."/>
            <person name="Dietrich F.S."/>
            <person name="Fisk D.G."/>
            <person name="Binkley G."/>
            <person name="Balakrishnan R."/>
            <person name="Costanzo M.C."/>
            <person name="Dwight S.S."/>
            <person name="Hitz B.C."/>
            <person name="Karra K."/>
            <person name="Nash R.S."/>
            <person name="Weng S."/>
            <person name="Wong E.D."/>
            <person name="Lloyd P."/>
            <person name="Skrzypek M.S."/>
            <person name="Miyasato S.R."/>
            <person name="Simison M."/>
            <person name="Cherry J.M."/>
        </authorList>
    </citation>
    <scope>GENOME REANNOTATION</scope>
    <source>
        <strain>ATCC 204508 / S288c</strain>
    </source>
</reference>
<reference key="3">
    <citation type="journal article" date="2003" name="Nature">
        <title>Global analysis of protein expression in yeast.</title>
        <authorList>
            <person name="Ghaemmaghami S."/>
            <person name="Huh W.-K."/>
            <person name="Bower K."/>
            <person name="Howson R.W."/>
            <person name="Belle A."/>
            <person name="Dephoure N."/>
            <person name="O'Shea E.K."/>
            <person name="Weissman J.S."/>
        </authorList>
    </citation>
    <scope>LEVEL OF PROTEIN EXPRESSION [LARGE SCALE ANALYSIS]</scope>
</reference>
<feature type="chain" id="PRO_0000215027" description="Probable 2-methylcitrate dehydratase">
    <location>
        <begin position="1"/>
        <end position="516"/>
    </location>
</feature>
<sequence>MFLAKNLKNNKIKVCLPKKKFAALSTASIQTNERPNPDKVLKDIAKYVHETPLKSSLALDTARLCFLDTLGCGLAALKFKQAQNIIKPIVPGTIVPSGTKILGTSYVMDPVKGAFAIGTLIRWLDYNDCWLAAEWGHPSDNLGGILAVADHLSRLNKATHGKNGKQFLVKDVLEAMIKAHEIQGIIALENSFNKVGLDHVVLVKVATAGVVSKMLGLSQEQTIEALSQAFVDGQSLRTYRHAPNTGSRKSWAAGDAVSRAVNLAYLVKNANVGTIPSVLTARTWGFYDVLFKGKPFSFQQRSKYDSYVMENVLFKISFPAEFHAQTAVEAAVKAYRILAKQGKTFKDIKSIRIRTQEAAMRIIDKSGPLYNYADRDHCIQYMIAVPLITGNLTATDYSDEVARNPEIDNLRSKMYCIEDTHLTQNYHDPDKRSIGNALLIELNDGTQLDEIFVEYPVGHKFRREEGIPLLMNKFQRHLREHFVESPDKVDLIMKVSSKTNFLNMQIDKYMDLFTEG</sequence>
<evidence type="ECO:0000250" key="1">
    <source>
        <dbReference type="UniProtKB" id="P77243"/>
    </source>
</evidence>
<evidence type="ECO:0000269" key="2">
    <source>
    </source>
</evidence>
<evidence type="ECO:0000305" key="3"/>
<keyword id="KW-0456">Lyase</keyword>
<keyword id="KW-1185">Reference proteome</keyword>
<gene>
    <name type="primary">PDH1</name>
    <name type="ordered locus">YPR002W</name>
    <name type="ORF">LPZ2W</name>
    <name type="ORF">YP9723.02</name>
</gene>
<protein>
    <recommendedName>
        <fullName evidence="1">Probable 2-methylcitrate dehydratase</fullName>
        <shortName evidence="1">2-MC dehydratase</shortName>
        <ecNumber evidence="1">4.2.1.79</ecNumber>
    </recommendedName>
    <alternativeName>
        <fullName evidence="1">(2S,3S)-2-methylcitrate dehydratase</fullName>
    </alternativeName>
</protein>
<proteinExistence type="evidence at protein level"/>